<gene>
    <name type="primary">Tor1aip2</name>
    <name type="synonym">Ifrg15</name>
    <name type="synonym">Lull1</name>
</gene>
<comment type="function">
    <text evidence="1">Required for endoplasmic reticulum integrity. Regulates the distribution of TOR1A between the endoplasmic reticulum and the nuclear envelope as well as induces TOR1A, TOR1B and TOR3A ATPase activity (By similarity).</text>
</comment>
<comment type="subunit">
    <text evidence="1">Interacts with TOR1A and TOR1B (ATP-bound).</text>
</comment>
<comment type="subcellular location">
    <subcellularLocation>
        <location evidence="1">Endoplasmic reticulum membrane</location>
        <topology evidence="1">Single-pass membrane protein</topology>
    </subcellularLocation>
    <subcellularLocation>
        <location evidence="1">Nucleus envelope</location>
    </subcellularLocation>
</comment>
<comment type="alternative products">
    <event type="alternative splicing"/>
    <isoform>
        <id>Q8BYU6-1</id>
        <name>Tor1aip2</name>
        <sequence type="displayed"/>
    </isoform>
    <isoform>
        <id>Q9ER81-1</id>
        <name>Ifrg15</name>
        <sequence type="external"/>
    </isoform>
</comment>
<comment type="tissue specificity">
    <text evidence="5">Expressed in the spinal cord and liver (at protein level).</text>
</comment>
<comment type="developmental stage">
    <text evidence="5 6">At 16 dpc, widely expressed with higher expression levels in non-neural cells and hippocampus. In the spinal cord, expressed as early as 12 dpc until p21, the expression levels decrease in the adulthood (at protein level).</text>
</comment>
<comment type="similarity">
    <text evidence="7">Belongs to the TOR1AIP family.</text>
</comment>
<proteinExistence type="evidence at protein level"/>
<sequence length="502" mass="54496">MSQSLKSQNTNMSDSGCRDPVGDSQNVLENDPSINSQTQDTRVTPNNTAEAQPLQPTSDLKEDHHEIGARAQEHTDTGDRSESPEEPALEKPPLDKAELESSPSSQDTELGHHPHSEHGGGDALDLDPNCSQSDLGGRADAHLESSSVASPEGAGDRGEADEHLESSSAAPTEGAGDRGEAGQELLAEDSTDGQSLGHSNTGPGNQDSLRRRLPVPEAGSHEEETELVKEKQEVAQDTLRKTDKKSLWTYGSVFLGCLIVAVVLSSVNSYYSSPAQQVPQNPALEAFLAQFGQLKEKFPGQSSFLWQRGRKFLQKHLNASNPSEPATIIFTAAREGKETLKCLSYHVANAYTSSQKVTAVSIDGAERALQDSDTVKLLVDLELSDGFENGHKAAVVHHFESLPAGSTLIFYKYCDHENAAFKDVALVLTVLLEEETLEASVSPREIEEKVRDLLWAKFTNSESPTSYSHMDSDKLSGLWSRISHLVLPVQPVRNIEERGCLL</sequence>
<protein>
    <recommendedName>
        <fullName>Torsin-1A-interacting protein 2</fullName>
    </recommendedName>
</protein>
<keyword id="KW-0025">Alternative splicing</keyword>
<keyword id="KW-0256">Endoplasmic reticulum</keyword>
<keyword id="KW-0325">Glycoprotein</keyword>
<keyword id="KW-0472">Membrane</keyword>
<keyword id="KW-0539">Nucleus</keyword>
<keyword id="KW-0597">Phosphoprotein</keyword>
<keyword id="KW-1185">Reference proteome</keyword>
<keyword id="KW-0812">Transmembrane</keyword>
<keyword id="KW-1133">Transmembrane helix</keyword>
<reference key="1">
    <citation type="journal article" date="2005" name="Science">
        <title>The transcriptional landscape of the mammalian genome.</title>
        <authorList>
            <person name="Carninci P."/>
            <person name="Kasukawa T."/>
            <person name="Katayama S."/>
            <person name="Gough J."/>
            <person name="Frith M.C."/>
            <person name="Maeda N."/>
            <person name="Oyama R."/>
            <person name="Ravasi T."/>
            <person name="Lenhard B."/>
            <person name="Wells C."/>
            <person name="Kodzius R."/>
            <person name="Shimokawa K."/>
            <person name="Bajic V.B."/>
            <person name="Brenner S.E."/>
            <person name="Batalov S."/>
            <person name="Forrest A.R."/>
            <person name="Zavolan M."/>
            <person name="Davis M.J."/>
            <person name="Wilming L.G."/>
            <person name="Aidinis V."/>
            <person name="Allen J.E."/>
            <person name="Ambesi-Impiombato A."/>
            <person name="Apweiler R."/>
            <person name="Aturaliya R.N."/>
            <person name="Bailey T.L."/>
            <person name="Bansal M."/>
            <person name="Baxter L."/>
            <person name="Beisel K.W."/>
            <person name="Bersano T."/>
            <person name="Bono H."/>
            <person name="Chalk A.M."/>
            <person name="Chiu K.P."/>
            <person name="Choudhary V."/>
            <person name="Christoffels A."/>
            <person name="Clutterbuck D.R."/>
            <person name="Crowe M.L."/>
            <person name="Dalla E."/>
            <person name="Dalrymple B.P."/>
            <person name="de Bono B."/>
            <person name="Della Gatta G."/>
            <person name="di Bernardo D."/>
            <person name="Down T."/>
            <person name="Engstrom P."/>
            <person name="Fagiolini M."/>
            <person name="Faulkner G."/>
            <person name="Fletcher C.F."/>
            <person name="Fukushima T."/>
            <person name="Furuno M."/>
            <person name="Futaki S."/>
            <person name="Gariboldi M."/>
            <person name="Georgii-Hemming P."/>
            <person name="Gingeras T.R."/>
            <person name="Gojobori T."/>
            <person name="Green R.E."/>
            <person name="Gustincich S."/>
            <person name="Harbers M."/>
            <person name="Hayashi Y."/>
            <person name="Hensch T.K."/>
            <person name="Hirokawa N."/>
            <person name="Hill D."/>
            <person name="Huminiecki L."/>
            <person name="Iacono M."/>
            <person name="Ikeo K."/>
            <person name="Iwama A."/>
            <person name="Ishikawa T."/>
            <person name="Jakt M."/>
            <person name="Kanapin A."/>
            <person name="Katoh M."/>
            <person name="Kawasawa Y."/>
            <person name="Kelso J."/>
            <person name="Kitamura H."/>
            <person name="Kitano H."/>
            <person name="Kollias G."/>
            <person name="Krishnan S.P."/>
            <person name="Kruger A."/>
            <person name="Kummerfeld S.K."/>
            <person name="Kurochkin I.V."/>
            <person name="Lareau L.F."/>
            <person name="Lazarevic D."/>
            <person name="Lipovich L."/>
            <person name="Liu J."/>
            <person name="Liuni S."/>
            <person name="McWilliam S."/>
            <person name="Madan Babu M."/>
            <person name="Madera M."/>
            <person name="Marchionni L."/>
            <person name="Matsuda H."/>
            <person name="Matsuzawa S."/>
            <person name="Miki H."/>
            <person name="Mignone F."/>
            <person name="Miyake S."/>
            <person name="Morris K."/>
            <person name="Mottagui-Tabar S."/>
            <person name="Mulder N."/>
            <person name="Nakano N."/>
            <person name="Nakauchi H."/>
            <person name="Ng P."/>
            <person name="Nilsson R."/>
            <person name="Nishiguchi S."/>
            <person name="Nishikawa S."/>
            <person name="Nori F."/>
            <person name="Ohara O."/>
            <person name="Okazaki Y."/>
            <person name="Orlando V."/>
            <person name="Pang K.C."/>
            <person name="Pavan W.J."/>
            <person name="Pavesi G."/>
            <person name="Pesole G."/>
            <person name="Petrovsky N."/>
            <person name="Piazza S."/>
            <person name="Reed J."/>
            <person name="Reid J.F."/>
            <person name="Ring B.Z."/>
            <person name="Ringwald M."/>
            <person name="Rost B."/>
            <person name="Ruan Y."/>
            <person name="Salzberg S.L."/>
            <person name="Sandelin A."/>
            <person name="Schneider C."/>
            <person name="Schoenbach C."/>
            <person name="Sekiguchi K."/>
            <person name="Semple C.A."/>
            <person name="Seno S."/>
            <person name="Sessa L."/>
            <person name="Sheng Y."/>
            <person name="Shibata Y."/>
            <person name="Shimada H."/>
            <person name="Shimada K."/>
            <person name="Silva D."/>
            <person name="Sinclair B."/>
            <person name="Sperling S."/>
            <person name="Stupka E."/>
            <person name="Sugiura K."/>
            <person name="Sultana R."/>
            <person name="Takenaka Y."/>
            <person name="Taki K."/>
            <person name="Tammoja K."/>
            <person name="Tan S.L."/>
            <person name="Tang S."/>
            <person name="Taylor M.S."/>
            <person name="Tegner J."/>
            <person name="Teichmann S.A."/>
            <person name="Ueda H.R."/>
            <person name="van Nimwegen E."/>
            <person name="Verardo R."/>
            <person name="Wei C.L."/>
            <person name="Yagi K."/>
            <person name="Yamanishi H."/>
            <person name="Zabarovsky E."/>
            <person name="Zhu S."/>
            <person name="Zimmer A."/>
            <person name="Hide W."/>
            <person name="Bult C."/>
            <person name="Grimmond S.M."/>
            <person name="Teasdale R.D."/>
            <person name="Liu E.T."/>
            <person name="Brusic V."/>
            <person name="Quackenbush J."/>
            <person name="Wahlestedt C."/>
            <person name="Mattick J.S."/>
            <person name="Hume D.A."/>
            <person name="Kai C."/>
            <person name="Sasaki D."/>
            <person name="Tomaru Y."/>
            <person name="Fukuda S."/>
            <person name="Kanamori-Katayama M."/>
            <person name="Suzuki M."/>
            <person name="Aoki J."/>
            <person name="Arakawa T."/>
            <person name="Iida J."/>
            <person name="Imamura K."/>
            <person name="Itoh M."/>
            <person name="Kato T."/>
            <person name="Kawaji H."/>
            <person name="Kawagashira N."/>
            <person name="Kawashima T."/>
            <person name="Kojima M."/>
            <person name="Kondo S."/>
            <person name="Konno H."/>
            <person name="Nakano K."/>
            <person name="Ninomiya N."/>
            <person name="Nishio T."/>
            <person name="Okada M."/>
            <person name="Plessy C."/>
            <person name="Shibata K."/>
            <person name="Shiraki T."/>
            <person name="Suzuki S."/>
            <person name="Tagami M."/>
            <person name="Waki K."/>
            <person name="Watahiki A."/>
            <person name="Okamura-Oho Y."/>
            <person name="Suzuki H."/>
            <person name="Kawai J."/>
            <person name="Hayashizaki Y."/>
        </authorList>
    </citation>
    <scope>NUCLEOTIDE SEQUENCE [LARGE SCALE MRNA]</scope>
    <source>
        <strain>C57BL/6J</strain>
        <tissue>Adipose tissue</tissue>
        <tissue>Thymus</tissue>
    </source>
</reference>
<reference key="2">
    <citation type="journal article" date="2004" name="Genome Res.">
        <title>The status, quality, and expansion of the NIH full-length cDNA project: the Mammalian Gene Collection (MGC).</title>
        <authorList>
            <consortium name="The MGC Project Team"/>
        </authorList>
    </citation>
    <scope>NUCLEOTIDE SEQUENCE [LARGE SCALE MRNA]</scope>
    <source>
        <strain>CD-1</strain>
        <tissue>Neural stem cell</tissue>
    </source>
</reference>
<reference key="3">
    <citation type="journal article" date="2005" name="Neuron">
        <title>Loss of the dystonia-associated protein torsinA selectively disrupts the neuronal nuclear envelope.</title>
        <authorList>
            <person name="Goodchild R.E."/>
            <person name="Kim C.E."/>
            <person name="Dauer W.T."/>
        </authorList>
    </citation>
    <scope>DEVELOPMENTAL STAGE</scope>
    <scope>TISSUE SPECIFICITY</scope>
</reference>
<reference key="4">
    <citation type="journal article" date="2009" name="Nat. Biotechnol.">
        <title>Mass-spectrometric identification and relative quantification of N-linked cell surface glycoproteins.</title>
        <authorList>
            <person name="Wollscheid B."/>
            <person name="Bausch-Fluck D."/>
            <person name="Henderson C."/>
            <person name="O'Brien R."/>
            <person name="Bibel M."/>
            <person name="Schiess R."/>
            <person name="Aebersold R."/>
            <person name="Watts J.D."/>
        </authorList>
    </citation>
    <scope>IDENTIFICATION BY MASS SPECTROMETRY</scope>
</reference>
<reference key="5">
    <citation type="journal article" date="2010" name="Cell">
        <title>A tissue-specific atlas of mouse protein phosphorylation and expression.</title>
        <authorList>
            <person name="Huttlin E.L."/>
            <person name="Jedrychowski M.P."/>
            <person name="Elias J.E."/>
            <person name="Goswami T."/>
            <person name="Rad R."/>
            <person name="Beausoleil S.A."/>
            <person name="Villen J."/>
            <person name="Haas W."/>
            <person name="Sowa M.E."/>
            <person name="Gygi S.P."/>
        </authorList>
    </citation>
    <scope>IDENTIFICATION BY MASS SPECTROMETRY [LARGE SCALE ANALYSIS]</scope>
    <source>
        <tissue>Brown adipose tissue</tissue>
        <tissue>Heart</tissue>
        <tissue>Kidney</tissue>
        <tissue>Liver</tissue>
        <tissue>Lung</tissue>
        <tissue>Pancreas</tissue>
        <tissue>Spleen</tissue>
        <tissue>Testis</tissue>
    </source>
</reference>
<reference key="6">
    <citation type="journal article" date="2010" name="Proc. Natl. Acad. Sci. U.S.A.">
        <title>A molecular mechanism underlying the neural-specific defect in torsinA mutant mice.</title>
        <authorList>
            <person name="Kim C.E."/>
            <person name="Perez A."/>
            <person name="Perkins G."/>
            <person name="Ellisman M.H."/>
            <person name="Dauer W.T."/>
        </authorList>
    </citation>
    <scope>DEVELOPMENTAL STAGE</scope>
</reference>
<accession>Q8BYU6</accession>
<accession>Q6NY10</accession>
<accession>Q8BJP0</accession>
<evidence type="ECO:0000250" key="1"/>
<evidence type="ECO:0000250" key="2">
    <source>
        <dbReference type="UniProtKB" id="Q8NFQ8"/>
    </source>
</evidence>
<evidence type="ECO:0000255" key="3"/>
<evidence type="ECO:0000256" key="4">
    <source>
        <dbReference type="SAM" id="MobiDB-lite"/>
    </source>
</evidence>
<evidence type="ECO:0000269" key="5">
    <source>
    </source>
</evidence>
<evidence type="ECO:0000269" key="6">
    <source>
    </source>
</evidence>
<evidence type="ECO:0000305" key="7"/>
<organism>
    <name type="scientific">Mus musculus</name>
    <name type="common">Mouse</name>
    <dbReference type="NCBI Taxonomy" id="10090"/>
    <lineage>
        <taxon>Eukaryota</taxon>
        <taxon>Metazoa</taxon>
        <taxon>Chordata</taxon>
        <taxon>Craniata</taxon>
        <taxon>Vertebrata</taxon>
        <taxon>Euteleostomi</taxon>
        <taxon>Mammalia</taxon>
        <taxon>Eutheria</taxon>
        <taxon>Euarchontoglires</taxon>
        <taxon>Glires</taxon>
        <taxon>Rodentia</taxon>
        <taxon>Myomorpha</taxon>
        <taxon>Muroidea</taxon>
        <taxon>Muridae</taxon>
        <taxon>Murinae</taxon>
        <taxon>Mus</taxon>
        <taxon>Mus</taxon>
    </lineage>
</organism>
<dbReference type="EMBL" id="AK038024">
    <property type="protein sequence ID" value="BAC29923.1"/>
    <property type="molecule type" value="mRNA"/>
</dbReference>
<dbReference type="EMBL" id="AK080959">
    <property type="protein sequence ID" value="BAC38096.1"/>
    <property type="molecule type" value="mRNA"/>
</dbReference>
<dbReference type="EMBL" id="BC066790">
    <property type="protein sequence ID" value="AAH66790.1"/>
    <property type="molecule type" value="mRNA"/>
</dbReference>
<dbReference type="CCDS" id="CCDS15389.1">
    <molecule id="Q8BYU6-1"/>
</dbReference>
<dbReference type="RefSeq" id="NP_001345555.1">
    <molecule id="Q8BYU6-1"/>
    <property type="nucleotide sequence ID" value="NM_001358626.1"/>
</dbReference>
<dbReference type="RefSeq" id="NP_001345556.1">
    <molecule id="Q8BYU6-1"/>
    <property type="nucleotide sequence ID" value="NM_001358627.1"/>
</dbReference>
<dbReference type="RefSeq" id="NP_766431.3">
    <molecule id="Q8BYU6-1"/>
    <property type="nucleotide sequence ID" value="NM_172843.4"/>
</dbReference>
<dbReference type="RefSeq" id="XP_006529650.1">
    <molecule id="Q8BYU6-1"/>
    <property type="nucleotide sequence ID" value="XM_006529587.4"/>
</dbReference>
<dbReference type="RefSeq" id="XP_006529651.1">
    <property type="nucleotide sequence ID" value="XM_006529588.3"/>
</dbReference>
<dbReference type="RefSeq" id="XP_006529652.1">
    <molecule id="Q8BYU6-1"/>
    <property type="nucleotide sequence ID" value="XM_006529589.4"/>
</dbReference>
<dbReference type="RefSeq" id="XP_011246305.1">
    <molecule id="Q8BYU6-1"/>
    <property type="nucleotide sequence ID" value="XM_011248003.2"/>
</dbReference>
<dbReference type="RefSeq" id="XP_017176040.1">
    <molecule id="Q8BYU6-1"/>
    <property type="nucleotide sequence ID" value="XM_017320551.3"/>
</dbReference>
<dbReference type="RefSeq" id="XP_017176041.1">
    <property type="nucleotide sequence ID" value="XM_017320552.1"/>
</dbReference>
<dbReference type="RefSeq" id="XP_030109864.1">
    <molecule id="Q8BYU6-1"/>
    <property type="nucleotide sequence ID" value="XM_030254004.2"/>
</dbReference>
<dbReference type="RefSeq" id="XP_036020683.1">
    <molecule id="Q8BYU6-1"/>
    <property type="nucleotide sequence ID" value="XM_036164790.1"/>
</dbReference>
<dbReference type="RefSeq" id="XP_036020684.1">
    <molecule id="Q8BYU6-1"/>
    <property type="nucleotide sequence ID" value="XM_036164791.1"/>
</dbReference>
<dbReference type="RefSeq" id="XP_036020685.1">
    <molecule id="Q8BYU6-1"/>
    <property type="nucleotide sequence ID" value="XM_036164792.1"/>
</dbReference>
<dbReference type="RefSeq" id="XP_036020686.1">
    <molecule id="Q8BYU6-1"/>
    <property type="nucleotide sequence ID" value="XM_036164793.1"/>
</dbReference>
<dbReference type="RefSeq" id="XP_036020687.1">
    <molecule id="Q8BYU6-1"/>
    <property type="nucleotide sequence ID" value="XM_036164794.1"/>
</dbReference>
<dbReference type="SMR" id="Q8BYU6"/>
<dbReference type="BioGRID" id="232245">
    <property type="interactions" value="4"/>
</dbReference>
<dbReference type="FunCoup" id="Q8BYU6">
    <property type="interactions" value="1226"/>
</dbReference>
<dbReference type="STRING" id="10090.ENSMUSP00000107387"/>
<dbReference type="GlyConnect" id="2773">
    <property type="glycosylation" value="1 N-Linked glycan (1 site)"/>
</dbReference>
<dbReference type="GlyCosmos" id="Q8BYU6">
    <property type="glycosylation" value="1 site, 1 glycan"/>
</dbReference>
<dbReference type="GlyGen" id="Q8BYU6">
    <property type="glycosylation" value="5 sites, 3 N-linked glycans (3 sites), 1 O-linked glycan (2 sites)"/>
</dbReference>
<dbReference type="iPTMnet" id="Q8BYU6"/>
<dbReference type="PhosphoSitePlus" id="Q8BYU6"/>
<dbReference type="SwissPalm" id="Q8BYU6"/>
<dbReference type="jPOST" id="Q8BYU6"/>
<dbReference type="PaxDb" id="10090-ENSMUSP00000107387"/>
<dbReference type="PeptideAtlas" id="Q8BYU6"/>
<dbReference type="ProteomicsDB" id="258949">
    <molecule id="Q8BYU6-1"/>
</dbReference>
<dbReference type="Pumba" id="Q8BYU6"/>
<dbReference type="Antibodypedia" id="60527">
    <property type="antibodies" value="70 antibodies from 16 providers"/>
</dbReference>
<dbReference type="DNASU" id="240832"/>
<dbReference type="Ensembl" id="ENSMUST00000060404.5">
    <molecule id="Q8BYU6-1"/>
    <property type="protein sequence ID" value="ENSMUSP00000050817.5"/>
    <property type="gene ID" value="ENSMUSG00000050565.17"/>
</dbReference>
<dbReference type="Ensembl" id="ENSMUST00000111757.10">
    <molecule id="Q8BYU6-1"/>
    <property type="protein sequence ID" value="ENSMUSP00000107387.4"/>
    <property type="gene ID" value="ENSMUSG00000050565.17"/>
</dbReference>
<dbReference type="GeneID" id="240832"/>
<dbReference type="UCSC" id="uc007dbx.2">
    <molecule id="Q8BYU6-1"/>
    <property type="organism name" value="mouse"/>
</dbReference>
<dbReference type="AGR" id="MGI:3582695"/>
<dbReference type="CTD" id="163590"/>
<dbReference type="MGI" id="MGI:3582695">
    <property type="gene designation" value="Tor1aip2"/>
</dbReference>
<dbReference type="VEuPathDB" id="HostDB:ENSMUSG00000050565"/>
<dbReference type="eggNOG" id="ENOG502QUV7">
    <property type="taxonomic scope" value="Eukaryota"/>
</dbReference>
<dbReference type="GeneTree" id="ENSGT00390000012166"/>
<dbReference type="HOGENOM" id="CLU_034263_1_1_1"/>
<dbReference type="InParanoid" id="Q8BYU6"/>
<dbReference type="OMA" id="ANTCLSA"/>
<dbReference type="OrthoDB" id="6258998at2759"/>
<dbReference type="PhylomeDB" id="Q8BYU6"/>
<dbReference type="TreeFam" id="TF329438"/>
<dbReference type="BioGRID-ORCS" id="240832">
    <property type="hits" value="7 hits in 74 CRISPR screens"/>
</dbReference>
<dbReference type="ChiTaRS" id="Tor1aip2">
    <property type="organism name" value="mouse"/>
</dbReference>
<dbReference type="Proteomes" id="UP000000589">
    <property type="component" value="Chromosome 1"/>
</dbReference>
<dbReference type="RNAct" id="Q8BYU6">
    <property type="molecule type" value="protein"/>
</dbReference>
<dbReference type="Bgee" id="ENSMUSG00000050565">
    <property type="expression patterns" value="Expressed in placenta labyrinth and 281 other cell types or tissues"/>
</dbReference>
<dbReference type="ExpressionAtlas" id="Q8BYU6">
    <property type="expression patterns" value="baseline and differential"/>
</dbReference>
<dbReference type="GO" id="GO:0005783">
    <property type="term" value="C:endoplasmic reticulum"/>
    <property type="evidence" value="ECO:0000314"/>
    <property type="project" value="MGI"/>
</dbReference>
<dbReference type="GO" id="GO:0005789">
    <property type="term" value="C:endoplasmic reticulum membrane"/>
    <property type="evidence" value="ECO:0007669"/>
    <property type="project" value="UniProtKB-SubCell"/>
</dbReference>
<dbReference type="GO" id="GO:0005635">
    <property type="term" value="C:nuclear envelope"/>
    <property type="evidence" value="ECO:0007669"/>
    <property type="project" value="UniProtKB-SubCell"/>
</dbReference>
<dbReference type="GO" id="GO:0001671">
    <property type="term" value="F:ATPase activator activity"/>
    <property type="evidence" value="ECO:0000250"/>
    <property type="project" value="UniProtKB"/>
</dbReference>
<dbReference type="GO" id="GO:0051117">
    <property type="term" value="F:ATPase binding"/>
    <property type="evidence" value="ECO:0007669"/>
    <property type="project" value="Ensembl"/>
</dbReference>
<dbReference type="GO" id="GO:0007029">
    <property type="term" value="P:endoplasmic reticulum organization"/>
    <property type="evidence" value="ECO:0000250"/>
    <property type="project" value="UniProtKB"/>
</dbReference>
<dbReference type="GO" id="GO:0032781">
    <property type="term" value="P:positive regulation of ATP-dependent activity"/>
    <property type="evidence" value="ECO:0000250"/>
    <property type="project" value="UniProtKB"/>
</dbReference>
<dbReference type="GO" id="GO:0090435">
    <property type="term" value="P:protein localization to nuclear envelope"/>
    <property type="evidence" value="ECO:0007669"/>
    <property type="project" value="Ensembl"/>
</dbReference>
<dbReference type="Gene3D" id="3.40.50.12190">
    <property type="match status" value="1"/>
</dbReference>
<dbReference type="InterPro" id="IPR038599">
    <property type="entry name" value="LAP1C-like_C_sf"/>
</dbReference>
<dbReference type="InterPro" id="IPR008662">
    <property type="entry name" value="TOIP1/2"/>
</dbReference>
<dbReference type="InterPro" id="IPR046753">
    <property type="entry name" value="TOIP1/2_C"/>
</dbReference>
<dbReference type="InterPro" id="IPR046754">
    <property type="entry name" value="TOIP1/2_N"/>
</dbReference>
<dbReference type="PANTHER" id="PTHR18843">
    <property type="entry name" value="TORSIN-1A-INTERACTING PROTEIN"/>
    <property type="match status" value="1"/>
</dbReference>
<dbReference type="PANTHER" id="PTHR18843:SF2">
    <property type="entry name" value="TORSIN-1A-INTERACTING PROTEIN 2"/>
    <property type="match status" value="1"/>
</dbReference>
<dbReference type="Pfam" id="PF05609">
    <property type="entry name" value="LAP1_C"/>
    <property type="match status" value="1"/>
</dbReference>
<dbReference type="Pfam" id="PF20443">
    <property type="entry name" value="LAP1_N"/>
    <property type="match status" value="1"/>
</dbReference>
<name>TOIP2_MOUSE</name>
<feature type="chain" id="PRO_0000228839" description="Torsin-1A-interacting protein 2">
    <location>
        <begin position="1"/>
        <end position="502"/>
    </location>
</feature>
<feature type="topological domain" description="Cytoplasmic" evidence="3">
    <location>
        <begin position="1"/>
        <end position="246"/>
    </location>
</feature>
<feature type="transmembrane region" description="Helical" evidence="3">
    <location>
        <begin position="247"/>
        <end position="267"/>
    </location>
</feature>
<feature type="topological domain" description="Lumenal" evidence="3">
    <location>
        <begin position="268"/>
        <end position="502"/>
    </location>
</feature>
<feature type="region of interest" description="Disordered" evidence="4">
    <location>
        <begin position="1"/>
        <end position="211"/>
    </location>
</feature>
<feature type="region of interest" description="Interaction with TOR1A" evidence="1">
    <location>
        <begin position="268"/>
        <end position="502"/>
    </location>
</feature>
<feature type="compositionally biased region" description="Polar residues" evidence="4">
    <location>
        <begin position="1"/>
        <end position="14"/>
    </location>
</feature>
<feature type="compositionally biased region" description="Polar residues" evidence="4">
    <location>
        <begin position="23"/>
        <end position="58"/>
    </location>
</feature>
<feature type="compositionally biased region" description="Basic and acidic residues" evidence="4">
    <location>
        <begin position="59"/>
        <end position="99"/>
    </location>
</feature>
<feature type="compositionally biased region" description="Basic and acidic residues" evidence="4">
    <location>
        <begin position="109"/>
        <end position="120"/>
    </location>
</feature>
<feature type="compositionally biased region" description="Basic and acidic residues" evidence="4">
    <location>
        <begin position="154"/>
        <end position="165"/>
    </location>
</feature>
<feature type="compositionally biased region" description="Polar residues" evidence="4">
    <location>
        <begin position="192"/>
        <end position="207"/>
    </location>
</feature>
<feature type="modified residue" description="Phosphoserine" evidence="2">
    <location>
        <position position="24"/>
    </location>
</feature>
<feature type="modified residue" description="Phosphoserine" evidence="2">
    <location>
        <position position="104"/>
    </location>
</feature>
<feature type="modified residue" description="Phosphoserine" evidence="2">
    <location>
        <position position="131"/>
    </location>
</feature>
<feature type="modified residue" description="Phosphoserine" evidence="2">
    <location>
        <position position="195"/>
    </location>
</feature>
<feature type="modified residue" description="Phosphothreonine" evidence="2">
    <location>
        <position position="225"/>
    </location>
</feature>
<feature type="glycosylation site" description="N-linked (GlcNAc...) asparagine" evidence="3">
    <location>
        <position position="318"/>
    </location>
</feature>
<feature type="sequence conflict" description="In Ref. 2; AAH66790." evidence="7" ref="2">
    <original>S</original>
    <variation>P</variation>
    <location>
        <position position="361"/>
    </location>
</feature>
<feature type="sequence conflict" description="In Ref. 2; AAH66790." evidence="7" ref="2">
    <original>D</original>
    <variation>G</variation>
    <location>
        <position position="373"/>
    </location>
</feature>
<feature type="sequence conflict" description="In Ref. 1; BAC38096." evidence="7" ref="1">
    <original>E</original>
    <variation>G</variation>
    <location>
        <position position="435"/>
    </location>
</feature>